<gene>
    <name evidence="5" type="primary">pyrH</name>
</gene>
<accession>A4D0H5</accession>
<accession>K7QVV7</accession>
<name>TRP5H_STRRG</name>
<evidence type="ECO:0000250" key="1">
    <source>
        <dbReference type="UniProtKB" id="P95480"/>
    </source>
</evidence>
<evidence type="ECO:0000269" key="2">
    <source>
    </source>
</evidence>
<evidence type="ECO:0000269" key="3">
    <source>
    </source>
</evidence>
<evidence type="ECO:0000269" key="4">
    <source>
    </source>
</evidence>
<evidence type="ECO:0000303" key="5">
    <source>
    </source>
</evidence>
<evidence type="ECO:0000305" key="6"/>
<evidence type="ECO:0000305" key="7">
    <source>
    </source>
</evidence>
<evidence type="ECO:0007744" key="8">
    <source>
        <dbReference type="PDB" id="2WES"/>
    </source>
</evidence>
<evidence type="ECO:0007744" key="9">
    <source>
        <dbReference type="PDB" id="2WET"/>
    </source>
</evidence>
<evidence type="ECO:0007744" key="10">
    <source>
        <dbReference type="PDB" id="2WEU"/>
    </source>
</evidence>
<evidence type="ECO:0007829" key="11">
    <source>
        <dbReference type="PDB" id="2WES"/>
    </source>
</evidence>
<evidence type="ECO:0007829" key="12">
    <source>
        <dbReference type="PDB" id="2WET"/>
    </source>
</evidence>
<evidence type="ECO:0007829" key="13">
    <source>
        <dbReference type="PDB" id="2WEU"/>
    </source>
</evidence>
<dbReference type="EC" id="1.14.19.58" evidence="2 4"/>
<dbReference type="EMBL" id="AY623051">
    <property type="protein sequence ID" value="AAU95674.1"/>
    <property type="molecule type" value="Genomic_DNA"/>
</dbReference>
<dbReference type="EMBL" id="JX042309">
    <property type="protein sequence ID" value="AFV71318.1"/>
    <property type="status" value="ALT_INIT"/>
    <property type="molecule type" value="Genomic_DNA"/>
</dbReference>
<dbReference type="PDB" id="2WES">
    <property type="method" value="X-ray"/>
    <property type="resolution" value="2.50 A"/>
    <property type="chains" value="A/B/C/D=1-511"/>
</dbReference>
<dbReference type="PDB" id="2WET">
    <property type="method" value="X-ray"/>
    <property type="resolution" value="2.40 A"/>
    <property type="chains" value="A/B/C/D=1-511"/>
</dbReference>
<dbReference type="PDB" id="2WEU">
    <property type="method" value="X-ray"/>
    <property type="resolution" value="1.70 A"/>
    <property type="chains" value="A/B/C/D=1-511"/>
</dbReference>
<dbReference type="PDBsum" id="2WES"/>
<dbReference type="PDBsum" id="2WET"/>
<dbReference type="PDBsum" id="2WEU"/>
<dbReference type="SMR" id="A4D0H5"/>
<dbReference type="KEGG" id="ag:AAU95674"/>
<dbReference type="BioCyc" id="MetaCyc:MONOMER-15294"/>
<dbReference type="BRENDA" id="1.14.19.58">
    <property type="organism ID" value="9058"/>
</dbReference>
<dbReference type="EvolutionaryTrace" id="A4D0H5"/>
<dbReference type="GO" id="GO:0004497">
    <property type="term" value="F:monooxygenase activity"/>
    <property type="evidence" value="ECO:0007669"/>
    <property type="project" value="InterPro"/>
</dbReference>
<dbReference type="GO" id="GO:0000166">
    <property type="term" value="F:nucleotide binding"/>
    <property type="evidence" value="ECO:0007669"/>
    <property type="project" value="UniProtKB-KW"/>
</dbReference>
<dbReference type="GO" id="GO:0017000">
    <property type="term" value="P:antibiotic biosynthetic process"/>
    <property type="evidence" value="ECO:0007669"/>
    <property type="project" value="UniProtKB-KW"/>
</dbReference>
<dbReference type="Gene3D" id="3.50.50.60">
    <property type="entry name" value="FAD/NAD(P)-binding domain"/>
    <property type="match status" value="1"/>
</dbReference>
<dbReference type="InterPro" id="IPR036188">
    <property type="entry name" value="FAD/NAD-bd_sf"/>
</dbReference>
<dbReference type="InterPro" id="IPR050816">
    <property type="entry name" value="Flavin-dep_Halogenase_NPB"/>
</dbReference>
<dbReference type="InterPro" id="IPR006905">
    <property type="entry name" value="Flavin_halogenase"/>
</dbReference>
<dbReference type="InterPro" id="IPR033856">
    <property type="entry name" value="Trp_halogen"/>
</dbReference>
<dbReference type="PANTHER" id="PTHR43747">
    <property type="entry name" value="FAD-BINDING PROTEIN"/>
    <property type="match status" value="1"/>
</dbReference>
<dbReference type="PANTHER" id="PTHR43747:SF4">
    <property type="entry name" value="FLAVIN-DEPENDENT TRYPTOPHAN HALOGENASE"/>
    <property type="match status" value="1"/>
</dbReference>
<dbReference type="Pfam" id="PF04820">
    <property type="entry name" value="Trp_halogenase"/>
    <property type="match status" value="1"/>
</dbReference>
<dbReference type="PIRSF" id="PIRSF011396">
    <property type="entry name" value="Trp_halogenase"/>
    <property type="match status" value="1"/>
</dbReference>
<dbReference type="SUPFAM" id="SSF51905">
    <property type="entry name" value="FAD/NAD(P)-binding domain"/>
    <property type="match status" value="1"/>
</dbReference>
<keyword id="KW-0002">3D-structure</keyword>
<keyword id="KW-0045">Antibiotic biosynthesis</keyword>
<keyword id="KW-0274">FAD</keyword>
<keyword id="KW-0285">Flavoprotein</keyword>
<keyword id="KW-0547">Nucleotide-binding</keyword>
<keyword id="KW-0560">Oxidoreductase</keyword>
<reference key="1">
    <citation type="journal article" date="2005" name="Chem. Biol.">
        <title>A regioselective tryptophan 5-halogenase is involved in pyrroindomycin biosynthesis in Streptomyces rugosporus LL-42D005.</title>
        <authorList>
            <person name="Zehner S."/>
            <person name="Kotzsch A."/>
            <person name="Bister B."/>
            <person name="Suessmuth R.D."/>
            <person name="Mendez C."/>
            <person name="Salas J.A."/>
            <person name="van Pee K.-H."/>
        </authorList>
    </citation>
    <scope>NUCLEOTIDE SEQUENCE [GENOMIC DNA]</scope>
    <scope>FUNCTION</scope>
    <scope>CATALYTIC ACTIVITY</scope>
    <scope>BIOPHYSICOCHEMICAL PROPERTIES</scope>
    <scope>PATHWAY</scope>
    <scope>DISRUPTION PHENOTYPE</scope>
    <source>
        <strain>NRRL 21084</strain>
    </source>
</reference>
<reference key="2">
    <citation type="journal article" date="2012" name="J. Am. Chem. Soc.">
        <title>Insights into pyrroindomycin biosynthesis reveal a uniform paradigm for tetramate/tetronate formation.</title>
        <authorList>
            <person name="Wu Q."/>
            <person name="Wu Z."/>
            <person name="Qu X."/>
            <person name="Liu W."/>
        </authorList>
    </citation>
    <scope>NUCLEOTIDE SEQUENCE [GENOMIC DNA]</scope>
    <source>
        <strain>NRRL 21084</strain>
    </source>
</reference>
<reference key="3">
    <citation type="journal article" date="2021" name="J. Biol. Chem.">
        <title>Dissecting the low catalytic capability of flavin-dependent halogenases.</title>
        <authorList>
            <person name="Phintha A."/>
            <person name="Prakinee K."/>
            <person name="Jaruwat A."/>
            <person name="Lawan N."/>
            <person name="Visitsatthawong S."/>
            <person name="Kantiwiriyawanitch C."/>
            <person name="Songsungthong W."/>
            <person name="Trisrivirat D."/>
            <person name="Chenprakhon P."/>
            <person name="Mulholland A."/>
            <person name="van Pee K.H."/>
            <person name="Chitnumsub P."/>
            <person name="Chaiyen P."/>
        </authorList>
    </citation>
    <scope>FUNCTION</scope>
    <scope>CATALYTIC ACTIVITY</scope>
</reference>
<reference evidence="8 9 10" key="4">
    <citation type="journal article" date="2009" name="J. Mol. Biol.">
        <title>Structural insights into regioselectivity in the enzymatic chlorination of tryptophan.</title>
        <authorList>
            <person name="Zhu X."/>
            <person name="De Laurentis W."/>
            <person name="Leang K."/>
            <person name="Herrmann J."/>
            <person name="Ihlefeld K."/>
            <person name="van Pee K.H."/>
            <person name="Naismith J.H."/>
        </authorList>
    </citation>
    <scope>X-RAY CRYSTALLOGRAPHY (1.70 ANGSTROMS) OF WILD-TYPE AND MUTANT GLN-46 IN COMPLEXES WITH CHLORIDE; FAD AND TRYPTOPHAN</scope>
    <scope>BIOPHYSICOCHEMICAL PROPERTIES</scope>
    <scope>SUBUNIT</scope>
    <scope>DOMAIN</scope>
    <scope>MUTAGENESIS OF GLU-46; PHE-49 AND TYR-454</scope>
</reference>
<proteinExistence type="evidence at protein level"/>
<protein>
    <recommendedName>
        <fullName evidence="5">Tryptophan 5-halogenase PyrH</fullName>
        <ecNumber evidence="2 4">1.14.19.58</ecNumber>
    </recommendedName>
</protein>
<feature type="chain" id="PRO_0000458997" description="Tryptophan 5-halogenase PyrH">
    <location>
        <begin position="1"/>
        <end position="511"/>
    </location>
</feature>
<feature type="active site" evidence="1">
    <location>
        <position position="75"/>
    </location>
</feature>
<feature type="binding site" evidence="3 8 9">
    <location>
        <position position="10"/>
    </location>
    <ligand>
        <name>FAD</name>
        <dbReference type="ChEBI" id="CHEBI:57692"/>
    </ligand>
</feature>
<feature type="binding site" evidence="3 8 9">
    <location>
        <position position="13"/>
    </location>
    <ligand>
        <name>FAD</name>
        <dbReference type="ChEBI" id="CHEBI:57692"/>
    </ligand>
</feature>
<feature type="binding site" evidence="3 8 9">
    <location>
        <position position="36"/>
    </location>
    <ligand>
        <name>FAD</name>
        <dbReference type="ChEBI" id="CHEBI:57692"/>
    </ligand>
</feature>
<feature type="binding site" evidence="3 8 9">
    <location>
        <position position="39"/>
    </location>
    <ligand>
        <name>FAD</name>
        <dbReference type="ChEBI" id="CHEBI:57692"/>
    </ligand>
</feature>
<feature type="binding site" evidence="3 8 9">
    <location>
        <position position="42"/>
    </location>
    <ligand>
        <name>FAD</name>
        <dbReference type="ChEBI" id="CHEBI:57692"/>
    </ligand>
</feature>
<feature type="binding site" evidence="3 9">
    <location>
        <position position="44"/>
    </location>
    <ligand>
        <name>FAD</name>
        <dbReference type="ChEBI" id="CHEBI:57692"/>
    </ligand>
</feature>
<feature type="binding site" evidence="3 8 9">
    <location>
        <position position="47"/>
    </location>
    <ligand>
        <name>FAD</name>
        <dbReference type="ChEBI" id="CHEBI:57692"/>
    </ligand>
</feature>
<feature type="binding site" evidence="3 9 10">
    <location>
        <position position="50"/>
    </location>
    <ligand>
        <name>L-tryptophan</name>
        <dbReference type="ChEBI" id="CHEBI:57912"/>
    </ligand>
</feature>
<feature type="binding site" evidence="3 9 10">
    <location>
        <position position="93"/>
    </location>
    <ligand>
        <name>L-tryptophan</name>
        <dbReference type="ChEBI" id="CHEBI:57912"/>
    </ligand>
</feature>
<feature type="binding site" evidence="3 9 10">
    <location>
        <position position="160"/>
    </location>
    <ligand>
        <name>L-tryptophan</name>
        <dbReference type="ChEBI" id="CHEBI:57912"/>
    </ligand>
</feature>
<feature type="binding site" evidence="3 9 10">
    <location>
        <position position="163"/>
    </location>
    <ligand>
        <name>L-tryptophan</name>
        <dbReference type="ChEBI" id="CHEBI:57912"/>
    </ligand>
</feature>
<feature type="binding site" evidence="3 8 9">
    <location>
        <position position="195"/>
    </location>
    <ligand>
        <name>FAD</name>
        <dbReference type="ChEBI" id="CHEBI:57692"/>
    </ligand>
</feature>
<feature type="binding site" evidence="3 8 9">
    <location>
        <position position="345"/>
    </location>
    <ligand>
        <name>FAD</name>
        <dbReference type="ChEBI" id="CHEBI:57692"/>
    </ligand>
</feature>
<feature type="binding site" evidence="3 8 9">
    <location>
        <position position="356"/>
    </location>
    <ligand>
        <name>chloride</name>
        <dbReference type="ChEBI" id="CHEBI:17996"/>
    </ligand>
</feature>
<feature type="binding site" evidence="3 8 9">
    <location>
        <position position="357"/>
    </location>
    <ligand>
        <name>chloride</name>
        <dbReference type="ChEBI" id="CHEBI:17996"/>
    </ligand>
</feature>
<feature type="binding site" evidence="3 8 9">
    <location>
        <position position="358"/>
    </location>
    <ligand>
        <name>FAD</name>
        <dbReference type="ChEBI" id="CHEBI:57692"/>
    </ligand>
</feature>
<feature type="binding site" evidence="3 9 10">
    <location>
        <position position="450"/>
    </location>
    <ligand>
        <name>L-tryptophan</name>
        <dbReference type="ChEBI" id="CHEBI:57912"/>
    </ligand>
</feature>
<feature type="binding site" evidence="3 9 10">
    <location>
        <position position="454"/>
    </location>
    <ligand>
        <name>L-tryptophan</name>
        <dbReference type="ChEBI" id="CHEBI:57912"/>
    </ligand>
</feature>
<feature type="site" description="Important for activity" evidence="1">
    <location>
        <position position="354"/>
    </location>
</feature>
<feature type="mutagenesis site" description="56-fold decrease in catalytic efficiency." evidence="3">
    <original>E</original>
    <variation>D</variation>
    <location>
        <position position="46"/>
    </location>
</feature>
<feature type="mutagenesis site" description="14-fold decrease in catalytic efficiency." evidence="3">
    <original>E</original>
    <variation>Q</variation>
    <location>
        <position position="46"/>
    </location>
</feature>
<feature type="mutagenesis site" description="20-fold decrease in catalytic efficiency." evidence="3">
    <original>F</original>
    <variation>A</variation>
    <location>
        <position position="49"/>
    </location>
</feature>
<feature type="mutagenesis site" description="11-fold decrease in catalytic efficiency." evidence="3">
    <original>Y</original>
    <variation>F</variation>
    <location>
        <position position="454"/>
    </location>
</feature>
<feature type="strand" evidence="13">
    <location>
        <begin position="4"/>
        <end position="8"/>
    </location>
</feature>
<feature type="helix" evidence="13">
    <location>
        <begin position="11"/>
        <end position="25"/>
    </location>
</feature>
<feature type="helix" evidence="13">
    <location>
        <begin position="26"/>
        <end position="28"/>
    </location>
</feature>
<feature type="strand" evidence="13">
    <location>
        <begin position="29"/>
        <end position="35"/>
    </location>
</feature>
<feature type="strand" evidence="12">
    <location>
        <begin position="37"/>
        <end position="39"/>
    </location>
</feature>
<feature type="strand" evidence="11">
    <location>
        <begin position="44"/>
        <end position="47"/>
    </location>
</feature>
<feature type="helix" evidence="13">
    <location>
        <begin position="52"/>
        <end position="59"/>
    </location>
</feature>
<feature type="helix" evidence="13">
    <location>
        <begin position="63"/>
        <end position="69"/>
    </location>
</feature>
<feature type="strand" evidence="13">
    <location>
        <begin position="73"/>
        <end position="75"/>
    </location>
</feature>
<feature type="strand" evidence="13">
    <location>
        <begin position="77"/>
        <end position="85"/>
    </location>
</feature>
<feature type="strand" evidence="13">
    <location>
        <begin position="89"/>
        <end position="94"/>
    </location>
</feature>
<feature type="helix" evidence="13">
    <location>
        <begin position="105"/>
        <end position="112"/>
    </location>
</feature>
<feature type="helix" evidence="13">
    <location>
        <begin position="119"/>
        <end position="123"/>
    </location>
</feature>
<feature type="helix" evidence="13">
    <location>
        <begin position="125"/>
        <end position="131"/>
    </location>
</feature>
<feature type="helix" evidence="13">
    <location>
        <begin position="157"/>
        <end position="159"/>
    </location>
</feature>
<feature type="helix" evidence="12">
    <location>
        <begin position="160"/>
        <end position="163"/>
    </location>
</feature>
<feature type="strand" evidence="13">
    <location>
        <begin position="167"/>
        <end position="170"/>
    </location>
</feature>
<feature type="helix" evidence="13">
    <location>
        <begin position="172"/>
        <end position="185"/>
    </location>
</feature>
<feature type="strand" evidence="13">
    <location>
        <begin position="189"/>
        <end position="192"/>
    </location>
</feature>
<feature type="strand" evidence="13">
    <location>
        <begin position="195"/>
        <end position="200"/>
    </location>
</feature>
<feature type="strand" evidence="13">
    <location>
        <begin position="206"/>
        <end position="214"/>
    </location>
</feature>
<feature type="strand" evidence="13">
    <location>
        <begin position="216"/>
        <end position="218"/>
    </location>
</feature>
<feature type="strand" evidence="13">
    <location>
        <begin position="220"/>
        <end position="224"/>
    </location>
</feature>
<feature type="helix" evidence="13">
    <location>
        <begin position="227"/>
        <end position="229"/>
    </location>
</feature>
<feature type="helix" evidence="13">
    <location>
        <begin position="231"/>
        <end position="236"/>
    </location>
</feature>
<feature type="strand" evidence="13">
    <location>
        <begin position="241"/>
        <end position="243"/>
    </location>
</feature>
<feature type="turn" evidence="13">
    <location>
        <begin position="245"/>
        <end position="247"/>
    </location>
</feature>
<feature type="strand" evidence="13">
    <location>
        <begin position="252"/>
        <end position="259"/>
    </location>
</feature>
<feature type="helix" evidence="13">
    <location>
        <begin position="263"/>
        <end position="265"/>
    </location>
</feature>
<feature type="strand" evidence="13">
    <location>
        <begin position="268"/>
        <end position="275"/>
    </location>
</feature>
<feature type="strand" evidence="13">
    <location>
        <begin position="278"/>
        <end position="284"/>
    </location>
</feature>
<feature type="strand" evidence="13">
    <location>
        <begin position="286"/>
        <end position="295"/>
    </location>
</feature>
<feature type="turn" evidence="13">
    <location>
        <begin position="297"/>
        <end position="299"/>
    </location>
</feature>
<feature type="helix" evidence="13">
    <location>
        <begin position="302"/>
        <end position="313"/>
    </location>
</feature>
<feature type="strand" evidence="13">
    <location>
        <begin position="323"/>
        <end position="326"/>
    </location>
</feature>
<feature type="strand" evidence="13">
    <location>
        <begin position="330"/>
        <end position="333"/>
    </location>
</feature>
<feature type="strand" evidence="13">
    <location>
        <begin position="335"/>
        <end position="337"/>
    </location>
</feature>
<feature type="strand" evidence="13">
    <location>
        <begin position="340"/>
        <end position="342"/>
    </location>
</feature>
<feature type="helix" evidence="13">
    <location>
        <begin position="344"/>
        <end position="346"/>
    </location>
</feature>
<feature type="helix" evidence="12">
    <location>
        <begin position="352"/>
        <end position="354"/>
    </location>
</feature>
<feature type="helix" evidence="13">
    <location>
        <begin position="357"/>
        <end position="370"/>
    </location>
</feature>
<feature type="helix" evidence="13">
    <location>
        <begin position="379"/>
        <end position="406"/>
    </location>
</feature>
<feature type="helix" evidence="13">
    <location>
        <begin position="413"/>
        <end position="420"/>
    </location>
</feature>
<feature type="helix" evidence="13">
    <location>
        <begin position="427"/>
        <end position="434"/>
    </location>
</feature>
<feature type="turn" evidence="13">
    <location>
        <begin position="441"/>
        <end position="443"/>
    </location>
</feature>
<feature type="helix" evidence="13">
    <location>
        <begin position="453"/>
        <end position="463"/>
    </location>
</feature>
<feature type="helix" evidence="13">
    <location>
        <begin position="472"/>
        <end position="476"/>
    </location>
</feature>
<feature type="helix" evidence="13">
    <location>
        <begin position="480"/>
        <end position="499"/>
    </location>
</feature>
<feature type="helix" evidence="13">
    <location>
        <begin position="503"/>
        <end position="510"/>
    </location>
</feature>
<sequence>MIRSVVIVGGGTAGWMTASYLKAAFDDRIDVTLVESGNVRRIGVGEATFSTVRHFFDYLGLDEREWLPRCAGGYKLGIRFENWSEPGEYFYHPFERLRVVDGFNMAEWWLAVGDRRTSFSEACYLTHRLCEAKRAPRMLDGSLFASQVDESLGRSTLAEQRAQFPYAYHFDADEVARYLSEYAIARGVRHVVDDVQHVGQDERGWISGVHTKQHGEISGDLFVDCTGFRGLLINQTLGGRFQSFSDVLPNNRAVALRVPRENDEDMRPYTTATAMSAGWMWTIPLFKRDGNGYVYSDEFISPEEAERELRSTVAPGRDDLEANHIQMRIGRNERTWINNCVAVGLSAAFVEPLESTGIFFIQHAIEQLVKHFPGERWDPVLISAYNERMAHMVDGVKEFLVLHYKGAQREDTPYWKAAKTRAMPDGLARKLELSASHLLDEQTIYPYYHGFETYSWITMNLGLGIVPERPRPALLHMDPAPALAEFERLRREGDELIAALPSCYEYLASIQ</sequence>
<comment type="function">
    <text evidence="2 4">Involved in the biosynthesis of the antibiotic compound pyrroindomycin B (PubMed:15850981). Catalyzes the chlorination of tryptophan (Trp) at C5 position to yield 5-chloro-L-tryptophan (PubMed:15850981, PubMed:33465708). It is also able to use bromide ions to generate monobrominated Trp, but the brominating activity is only about 75% of the chlorinating activity (PubMed:15850981).</text>
</comment>
<comment type="catalytic activity">
    <reaction evidence="2 4">
        <text>L-tryptophan + FADH2 + chloride + O2 = 5-chloro-L-tryptophan + FAD + 2 H2O</text>
        <dbReference type="Rhea" id="RHEA:55896"/>
        <dbReference type="ChEBI" id="CHEBI:15377"/>
        <dbReference type="ChEBI" id="CHEBI:15379"/>
        <dbReference type="ChEBI" id="CHEBI:17996"/>
        <dbReference type="ChEBI" id="CHEBI:57692"/>
        <dbReference type="ChEBI" id="CHEBI:57912"/>
        <dbReference type="ChEBI" id="CHEBI:58307"/>
        <dbReference type="ChEBI" id="CHEBI:139332"/>
        <dbReference type="EC" id="1.14.19.58"/>
    </reaction>
    <physiologicalReaction direction="left-to-right" evidence="2">
        <dbReference type="Rhea" id="RHEA:55897"/>
    </physiologicalReaction>
</comment>
<comment type="biophysicochemical properties">
    <kinetics>
        <KM evidence="2">0.15 mM for L-tryptophan</KM>
        <KM evidence="3">0.109 mM for L-tryptophan</KM>
        <text evidence="3">kcat is 3.56 min(-1).</text>
    </kinetics>
</comment>
<comment type="pathway">
    <text evidence="2 7">Antibiotic biosynthesis.</text>
</comment>
<comment type="subunit">
    <text evidence="3">Homodimer.</text>
</comment>
<comment type="domain">
    <text evidence="3">The tryptophan-binding module binds the substrate in such a way as to expose the C5 position to the key lysine and glutamate residues at the site of chlorination.</text>
</comment>
<comment type="disruption phenotype">
    <text evidence="2">Mutant cannot produce pyrroindomycin B, but still produces pyrroindomycin A, the nonhalogenated derivative.</text>
</comment>
<comment type="similarity">
    <text evidence="6">Belongs to the flavin-dependent halogenase family. Bacterial tryptophan halogenase subfamily.</text>
</comment>
<comment type="sequence caution" evidence="6">
    <conflict type="erroneous initiation">
        <sequence resource="EMBL-CDS" id="AFV71318"/>
    </conflict>
    <text>Extended N-terminus.</text>
</comment>
<organism>
    <name type="scientific">Streptomyces rugosporus</name>
    <dbReference type="NCBI Taxonomy" id="295838"/>
    <lineage>
        <taxon>Bacteria</taxon>
        <taxon>Bacillati</taxon>
        <taxon>Actinomycetota</taxon>
        <taxon>Actinomycetes</taxon>
        <taxon>Kitasatosporales</taxon>
        <taxon>Streptomycetaceae</taxon>
        <taxon>Streptomyces</taxon>
    </lineage>
</organism>